<reference key="1">
    <citation type="journal article" date="2007" name="J. Bacteriol.">
        <title>The complete genome sequence of Bacillus thuringiensis Al Hakam.</title>
        <authorList>
            <person name="Challacombe J.F."/>
            <person name="Altherr M.R."/>
            <person name="Xie G."/>
            <person name="Bhotika S.S."/>
            <person name="Brown N."/>
            <person name="Bruce D."/>
            <person name="Campbell C.S."/>
            <person name="Campbell M.L."/>
            <person name="Chen J."/>
            <person name="Chertkov O."/>
            <person name="Cleland C."/>
            <person name="Dimitrijevic M."/>
            <person name="Doggett N.A."/>
            <person name="Fawcett J.J."/>
            <person name="Glavina T."/>
            <person name="Goodwin L.A."/>
            <person name="Green L.D."/>
            <person name="Han C.S."/>
            <person name="Hill K.K."/>
            <person name="Hitchcock P."/>
            <person name="Jackson P.J."/>
            <person name="Keim P."/>
            <person name="Kewalramani A.R."/>
            <person name="Longmire J."/>
            <person name="Lucas S."/>
            <person name="Malfatti S."/>
            <person name="Martinez D."/>
            <person name="McMurry K."/>
            <person name="Meincke L.J."/>
            <person name="Misra M."/>
            <person name="Moseman B.L."/>
            <person name="Mundt M."/>
            <person name="Munk A.C."/>
            <person name="Okinaka R.T."/>
            <person name="Parson-Quintana B."/>
            <person name="Reilly L.P."/>
            <person name="Richardson P."/>
            <person name="Robinson D.L."/>
            <person name="Saunders E."/>
            <person name="Tapia R."/>
            <person name="Tesmer J.G."/>
            <person name="Thayer N."/>
            <person name="Thompson L.S."/>
            <person name="Tice H."/>
            <person name="Ticknor L.O."/>
            <person name="Wills P.L."/>
            <person name="Gilna P."/>
            <person name="Brettin T.S."/>
        </authorList>
    </citation>
    <scope>NUCLEOTIDE SEQUENCE [LARGE SCALE GENOMIC DNA]</scope>
    <source>
        <strain>Al Hakam</strain>
    </source>
</reference>
<feature type="chain" id="PRO_0000301411" description="Anti-sigma F factor">
    <location>
        <begin position="1"/>
        <end position="146"/>
    </location>
</feature>
<evidence type="ECO:0000255" key="1">
    <source>
        <dbReference type="HAMAP-Rule" id="MF_00637"/>
    </source>
</evidence>
<sequence>MRNEMNLQFSALSQNESFARVTVAAFIAQLDPTMEELTEIKTVVSEAVTNAIIHGYEGNAEGVVYISVILEEAMVKLTIRDEGIGIFNLDEARQPLFTTKPELERSGMGFTIMENFMDEVEVISNESFGTTIHLTKYLSNSNALCN</sequence>
<keyword id="KW-0067">ATP-binding</keyword>
<keyword id="KW-0418">Kinase</keyword>
<keyword id="KW-0547">Nucleotide-binding</keyword>
<keyword id="KW-0723">Serine/threonine-protein kinase</keyword>
<keyword id="KW-0749">Sporulation</keyword>
<keyword id="KW-0808">Transferase</keyword>
<name>SP2AB_BACAH</name>
<proteinExistence type="inferred from homology"/>
<organism>
    <name type="scientific">Bacillus thuringiensis (strain Al Hakam)</name>
    <dbReference type="NCBI Taxonomy" id="412694"/>
    <lineage>
        <taxon>Bacteria</taxon>
        <taxon>Bacillati</taxon>
        <taxon>Bacillota</taxon>
        <taxon>Bacilli</taxon>
        <taxon>Bacillales</taxon>
        <taxon>Bacillaceae</taxon>
        <taxon>Bacillus</taxon>
        <taxon>Bacillus cereus group</taxon>
    </lineage>
</organism>
<comment type="function">
    <text evidence="1">Binds to sigma F and blocks its ability to form an RNA polymerase holoenzyme (E-sigma F). Phosphorylates SpoIIAA on a serine residue. This phosphorylation may enable SpoIIAA to act as an anti-anti-sigma factor that counteracts SpoIIAB and thus releases sigma F from inhibition.</text>
</comment>
<comment type="catalytic activity">
    <reaction evidence="1">
        <text>L-seryl-[protein] + ATP = O-phospho-L-seryl-[protein] + ADP + H(+)</text>
        <dbReference type="Rhea" id="RHEA:17989"/>
        <dbReference type="Rhea" id="RHEA-COMP:9863"/>
        <dbReference type="Rhea" id="RHEA-COMP:11604"/>
        <dbReference type="ChEBI" id="CHEBI:15378"/>
        <dbReference type="ChEBI" id="CHEBI:29999"/>
        <dbReference type="ChEBI" id="CHEBI:30616"/>
        <dbReference type="ChEBI" id="CHEBI:83421"/>
        <dbReference type="ChEBI" id="CHEBI:456216"/>
        <dbReference type="EC" id="2.7.11.1"/>
    </reaction>
</comment>
<comment type="catalytic activity">
    <reaction evidence="1">
        <text>L-threonyl-[protein] + ATP = O-phospho-L-threonyl-[protein] + ADP + H(+)</text>
        <dbReference type="Rhea" id="RHEA:46608"/>
        <dbReference type="Rhea" id="RHEA-COMP:11060"/>
        <dbReference type="Rhea" id="RHEA-COMP:11605"/>
        <dbReference type="ChEBI" id="CHEBI:15378"/>
        <dbReference type="ChEBI" id="CHEBI:30013"/>
        <dbReference type="ChEBI" id="CHEBI:30616"/>
        <dbReference type="ChEBI" id="CHEBI:61977"/>
        <dbReference type="ChEBI" id="CHEBI:456216"/>
        <dbReference type="EC" id="2.7.11.1"/>
    </reaction>
</comment>
<comment type="similarity">
    <text evidence="1">Belongs to the anti-sigma-factor family.</text>
</comment>
<gene>
    <name evidence="1" type="primary">spoIIAB</name>
    <name type="ordered locus">BALH_3691</name>
</gene>
<dbReference type="EC" id="2.7.11.1" evidence="1"/>
<dbReference type="EMBL" id="CP000485">
    <property type="protein sequence ID" value="ABK86921.1"/>
    <property type="molecule type" value="Genomic_DNA"/>
</dbReference>
<dbReference type="RefSeq" id="WP_001243400.1">
    <property type="nucleotide sequence ID" value="NC_008600.1"/>
</dbReference>
<dbReference type="SMR" id="A0RI78"/>
<dbReference type="GeneID" id="92883500"/>
<dbReference type="KEGG" id="btl:BALH_3691"/>
<dbReference type="HOGENOM" id="CLU_090336_11_0_9"/>
<dbReference type="GO" id="GO:0005524">
    <property type="term" value="F:ATP binding"/>
    <property type="evidence" value="ECO:0007669"/>
    <property type="project" value="UniProtKB-KW"/>
</dbReference>
<dbReference type="GO" id="GO:0106310">
    <property type="term" value="F:protein serine kinase activity"/>
    <property type="evidence" value="ECO:0007669"/>
    <property type="project" value="RHEA"/>
</dbReference>
<dbReference type="GO" id="GO:0004674">
    <property type="term" value="F:protein serine/threonine kinase activity"/>
    <property type="evidence" value="ECO:0007669"/>
    <property type="project" value="UniProtKB-KW"/>
</dbReference>
<dbReference type="GO" id="GO:0016989">
    <property type="term" value="F:sigma factor antagonist activity"/>
    <property type="evidence" value="ECO:0007669"/>
    <property type="project" value="InterPro"/>
</dbReference>
<dbReference type="GO" id="GO:0030436">
    <property type="term" value="P:asexual sporulation"/>
    <property type="evidence" value="ECO:0007669"/>
    <property type="project" value="UniProtKB-UniRule"/>
</dbReference>
<dbReference type="GO" id="GO:0042174">
    <property type="term" value="P:negative regulation of sporulation resulting in formation of a cellular spore"/>
    <property type="evidence" value="ECO:0007669"/>
    <property type="project" value="InterPro"/>
</dbReference>
<dbReference type="GO" id="GO:0030435">
    <property type="term" value="P:sporulation resulting in formation of a cellular spore"/>
    <property type="evidence" value="ECO:0007669"/>
    <property type="project" value="UniProtKB-KW"/>
</dbReference>
<dbReference type="FunFam" id="3.30.565.10:FF:000022">
    <property type="entry name" value="Anti-sigma F factor"/>
    <property type="match status" value="1"/>
</dbReference>
<dbReference type="Gene3D" id="3.30.565.10">
    <property type="entry name" value="Histidine kinase-like ATPase, C-terminal domain"/>
    <property type="match status" value="1"/>
</dbReference>
<dbReference type="HAMAP" id="MF_00637">
    <property type="entry name" value="Anti_sigma_F"/>
    <property type="match status" value="1"/>
</dbReference>
<dbReference type="InterPro" id="IPR050267">
    <property type="entry name" value="Anti-sigma-factor_SerPK"/>
</dbReference>
<dbReference type="InterPro" id="IPR010194">
    <property type="entry name" value="Anti-sigma_F"/>
</dbReference>
<dbReference type="InterPro" id="IPR036890">
    <property type="entry name" value="HATPase_C_sf"/>
</dbReference>
<dbReference type="NCBIfam" id="TIGR01925">
    <property type="entry name" value="spIIAB"/>
    <property type="match status" value="1"/>
</dbReference>
<dbReference type="PANTHER" id="PTHR35526:SF3">
    <property type="entry name" value="ANTI-SIGMA-F FACTOR RSBW"/>
    <property type="match status" value="1"/>
</dbReference>
<dbReference type="PANTHER" id="PTHR35526">
    <property type="entry name" value="ANTI-SIGMA-F FACTOR RSBW-RELATED"/>
    <property type="match status" value="1"/>
</dbReference>
<dbReference type="Pfam" id="PF13581">
    <property type="entry name" value="HATPase_c_2"/>
    <property type="match status" value="1"/>
</dbReference>
<dbReference type="SMART" id="SM00387">
    <property type="entry name" value="HATPase_c"/>
    <property type="match status" value="1"/>
</dbReference>
<dbReference type="SUPFAM" id="SSF55874">
    <property type="entry name" value="ATPase domain of HSP90 chaperone/DNA topoisomerase II/histidine kinase"/>
    <property type="match status" value="1"/>
</dbReference>
<protein>
    <recommendedName>
        <fullName evidence="1">Anti-sigma F factor</fullName>
        <ecNumber evidence="1">2.7.11.1</ecNumber>
    </recommendedName>
    <alternativeName>
        <fullName evidence="1">Stage II sporulation protein AB</fullName>
    </alternativeName>
</protein>
<accession>A0RI78</accession>